<sequence length="117" mass="13036">MDKKTARLSRSKRTRIKLRELGHTRLCVYRTPRHVYAQVISGDGSTVLVAASTVEKDVKAKCKYTGNVESAAIVGEIIADRCKEKGISQVAFDRSGYKYHGRVKALVEAAREHGLQF</sequence>
<protein>
    <recommendedName>
        <fullName evidence="1">Large ribosomal subunit protein uL18</fullName>
    </recommendedName>
    <alternativeName>
        <fullName evidence="2">50S ribosomal protein L18</fullName>
    </alternativeName>
</protein>
<evidence type="ECO:0000255" key="1">
    <source>
        <dbReference type="HAMAP-Rule" id="MF_01337"/>
    </source>
</evidence>
<evidence type="ECO:0000305" key="2"/>
<proteinExistence type="inferred from homology"/>
<feature type="chain" id="PRO_1000053026" description="Large ribosomal subunit protein uL18">
    <location>
        <begin position="1"/>
        <end position="117"/>
    </location>
</feature>
<name>RL18_FRATF</name>
<comment type="function">
    <text evidence="1">This is one of the proteins that bind and probably mediate the attachment of the 5S RNA into the large ribosomal subunit, where it forms part of the central protuberance.</text>
</comment>
<comment type="subunit">
    <text evidence="1">Part of the 50S ribosomal subunit; part of the 5S rRNA/L5/L18/L25 subcomplex. Contacts the 5S and 23S rRNAs.</text>
</comment>
<comment type="similarity">
    <text evidence="1">Belongs to the universal ribosomal protein uL18 family.</text>
</comment>
<accession>A7N9U1</accession>
<reference key="1">
    <citation type="journal article" date="2009" name="PLoS ONE">
        <title>Complete genome sequence of Francisella tularensis subspecies holarctica FTNF002-00.</title>
        <authorList>
            <person name="Barabote R.D."/>
            <person name="Xie G."/>
            <person name="Brettin T.S."/>
            <person name="Hinrichs S.H."/>
            <person name="Fey P.D."/>
            <person name="Jay J.J."/>
            <person name="Engle J.L."/>
            <person name="Godbole S.D."/>
            <person name="Noronha J.M."/>
            <person name="Scheuermann R.H."/>
            <person name="Zhou L.W."/>
            <person name="Lion C."/>
            <person name="Dempsey M.P."/>
        </authorList>
    </citation>
    <scope>NUCLEOTIDE SEQUENCE [LARGE SCALE GENOMIC DNA]</scope>
    <source>
        <strain>FTNF002-00 / FTA</strain>
    </source>
</reference>
<dbReference type="EMBL" id="CP000803">
    <property type="protein sequence ID" value="ABU60744.1"/>
    <property type="molecule type" value="Genomic_DNA"/>
</dbReference>
<dbReference type="RefSeq" id="WP_003014360.1">
    <property type="nucleotide sequence ID" value="NC_009749.1"/>
</dbReference>
<dbReference type="SMR" id="A7N9U1"/>
<dbReference type="KEGG" id="fta:FTA_0267"/>
<dbReference type="HOGENOM" id="CLU_098841_0_1_6"/>
<dbReference type="GO" id="GO:0022625">
    <property type="term" value="C:cytosolic large ribosomal subunit"/>
    <property type="evidence" value="ECO:0007669"/>
    <property type="project" value="TreeGrafter"/>
</dbReference>
<dbReference type="GO" id="GO:0008097">
    <property type="term" value="F:5S rRNA binding"/>
    <property type="evidence" value="ECO:0007669"/>
    <property type="project" value="TreeGrafter"/>
</dbReference>
<dbReference type="GO" id="GO:0003735">
    <property type="term" value="F:structural constituent of ribosome"/>
    <property type="evidence" value="ECO:0007669"/>
    <property type="project" value="InterPro"/>
</dbReference>
<dbReference type="GO" id="GO:0006412">
    <property type="term" value="P:translation"/>
    <property type="evidence" value="ECO:0007669"/>
    <property type="project" value="UniProtKB-UniRule"/>
</dbReference>
<dbReference type="CDD" id="cd00432">
    <property type="entry name" value="Ribosomal_L18_L5e"/>
    <property type="match status" value="1"/>
</dbReference>
<dbReference type="FunFam" id="3.30.420.100:FF:000001">
    <property type="entry name" value="50S ribosomal protein L18"/>
    <property type="match status" value="1"/>
</dbReference>
<dbReference type="Gene3D" id="3.30.420.100">
    <property type="match status" value="1"/>
</dbReference>
<dbReference type="HAMAP" id="MF_01337_B">
    <property type="entry name" value="Ribosomal_uL18_B"/>
    <property type="match status" value="1"/>
</dbReference>
<dbReference type="InterPro" id="IPR004389">
    <property type="entry name" value="Ribosomal_uL18_bac-type"/>
</dbReference>
<dbReference type="InterPro" id="IPR005484">
    <property type="entry name" value="Ribosomal_uL18_bac/euk"/>
</dbReference>
<dbReference type="NCBIfam" id="TIGR00060">
    <property type="entry name" value="L18_bact"/>
    <property type="match status" value="1"/>
</dbReference>
<dbReference type="PANTHER" id="PTHR12899">
    <property type="entry name" value="39S RIBOSOMAL PROTEIN L18, MITOCHONDRIAL"/>
    <property type="match status" value="1"/>
</dbReference>
<dbReference type="PANTHER" id="PTHR12899:SF3">
    <property type="entry name" value="LARGE RIBOSOMAL SUBUNIT PROTEIN UL18M"/>
    <property type="match status" value="1"/>
</dbReference>
<dbReference type="Pfam" id="PF00861">
    <property type="entry name" value="Ribosomal_L18p"/>
    <property type="match status" value="1"/>
</dbReference>
<dbReference type="SUPFAM" id="SSF53137">
    <property type="entry name" value="Translational machinery components"/>
    <property type="match status" value="1"/>
</dbReference>
<organism>
    <name type="scientific">Francisella tularensis subsp. holarctica (strain FTNF002-00 / FTA)</name>
    <dbReference type="NCBI Taxonomy" id="458234"/>
    <lineage>
        <taxon>Bacteria</taxon>
        <taxon>Pseudomonadati</taxon>
        <taxon>Pseudomonadota</taxon>
        <taxon>Gammaproteobacteria</taxon>
        <taxon>Thiotrichales</taxon>
        <taxon>Francisellaceae</taxon>
        <taxon>Francisella</taxon>
    </lineage>
</organism>
<keyword id="KW-0687">Ribonucleoprotein</keyword>
<keyword id="KW-0689">Ribosomal protein</keyword>
<keyword id="KW-0694">RNA-binding</keyword>
<keyword id="KW-0699">rRNA-binding</keyword>
<gene>
    <name evidence="1" type="primary">rplR</name>
    <name type="ordered locus">FTA_0267</name>
</gene>